<reference key="1">
    <citation type="submission" date="2006-12" db="EMBL/GenBank/DDBJ databases">
        <authorList>
            <person name="Hendrix L."/>
            <person name="Mohamoud Y."/>
            <person name="Radune D."/>
            <person name="Shvartsbeyn A."/>
            <person name="Daugherty S."/>
            <person name="Dodson R."/>
            <person name="Durkin A.S."/>
            <person name="Harkins D."/>
            <person name="Huot H."/>
            <person name="Kothari S.P."/>
            <person name="Madupu R."/>
            <person name="Li J."/>
            <person name="Nelson W.C."/>
            <person name="Shrivastava S."/>
            <person name="Giglio M.G."/>
            <person name="Haft D."/>
            <person name="Selengut J."/>
            <person name="Fraser-Ligget C."/>
            <person name="Seshadri R."/>
        </authorList>
    </citation>
    <scope>NUCLEOTIDE SEQUENCE [LARGE SCALE GENOMIC DNA]</scope>
    <source>
        <strain>ATCC 35685 / KC583 / Herrer 020/F12,63</strain>
    </source>
</reference>
<feature type="chain" id="PRO_0000297223" description="3-methyl-2-oxobutanoate hydroxymethyltransferase">
    <location>
        <begin position="1"/>
        <end position="271"/>
    </location>
</feature>
<feature type="active site" description="Proton acceptor" evidence="1">
    <location>
        <position position="187"/>
    </location>
</feature>
<feature type="binding site" evidence="1">
    <location>
        <begin position="49"/>
        <end position="50"/>
    </location>
    <ligand>
        <name>3-methyl-2-oxobutanoate</name>
        <dbReference type="ChEBI" id="CHEBI:11851"/>
    </ligand>
</feature>
<feature type="binding site" evidence="1">
    <location>
        <position position="49"/>
    </location>
    <ligand>
        <name>Mg(2+)</name>
        <dbReference type="ChEBI" id="CHEBI:18420"/>
    </ligand>
</feature>
<feature type="binding site" evidence="1">
    <location>
        <position position="88"/>
    </location>
    <ligand>
        <name>3-methyl-2-oxobutanoate</name>
        <dbReference type="ChEBI" id="CHEBI:11851"/>
    </ligand>
</feature>
<feature type="binding site" evidence="1">
    <location>
        <position position="88"/>
    </location>
    <ligand>
        <name>Mg(2+)</name>
        <dbReference type="ChEBI" id="CHEBI:18420"/>
    </ligand>
</feature>
<feature type="binding site" evidence="1">
    <location>
        <position position="118"/>
    </location>
    <ligand>
        <name>3-methyl-2-oxobutanoate</name>
        <dbReference type="ChEBI" id="CHEBI:11851"/>
    </ligand>
</feature>
<feature type="binding site" evidence="1">
    <location>
        <position position="120"/>
    </location>
    <ligand>
        <name>Mg(2+)</name>
        <dbReference type="ChEBI" id="CHEBI:18420"/>
    </ligand>
</feature>
<comment type="function">
    <text evidence="1">Catalyzes the reversible reaction in which hydroxymethyl group from 5,10-methylenetetrahydrofolate is transferred onto alpha-ketoisovalerate to form ketopantoate.</text>
</comment>
<comment type="catalytic activity">
    <reaction evidence="1">
        <text>3-methyl-2-oxobutanoate + (6R)-5,10-methylene-5,6,7,8-tetrahydrofolate + H2O = 2-dehydropantoate + (6S)-5,6,7,8-tetrahydrofolate</text>
        <dbReference type="Rhea" id="RHEA:11824"/>
        <dbReference type="ChEBI" id="CHEBI:11561"/>
        <dbReference type="ChEBI" id="CHEBI:11851"/>
        <dbReference type="ChEBI" id="CHEBI:15377"/>
        <dbReference type="ChEBI" id="CHEBI:15636"/>
        <dbReference type="ChEBI" id="CHEBI:57453"/>
        <dbReference type="EC" id="2.1.2.11"/>
    </reaction>
</comment>
<comment type="cofactor">
    <cofactor evidence="1">
        <name>Mg(2+)</name>
        <dbReference type="ChEBI" id="CHEBI:18420"/>
    </cofactor>
    <text evidence="1">Binds 1 Mg(2+) ion per subunit.</text>
</comment>
<comment type="pathway">
    <text evidence="1">Cofactor biosynthesis; (R)-pantothenate biosynthesis; (R)-pantoate from 3-methyl-2-oxobutanoate: step 1/2.</text>
</comment>
<comment type="subunit">
    <text evidence="1">Homodecamer; pentamer of dimers.</text>
</comment>
<comment type="subcellular location">
    <subcellularLocation>
        <location evidence="1">Cytoplasm</location>
    </subcellularLocation>
</comment>
<comment type="similarity">
    <text evidence="1">Belongs to the PanB family.</text>
</comment>
<protein>
    <recommendedName>
        <fullName evidence="1">3-methyl-2-oxobutanoate hydroxymethyltransferase</fullName>
        <ecNumber evidence="1">2.1.2.11</ecNumber>
    </recommendedName>
    <alternativeName>
        <fullName evidence="1">Ketopantoate hydroxymethyltransferase</fullName>
        <shortName evidence="1">KPHMT</shortName>
    </alternativeName>
</protein>
<keyword id="KW-0963">Cytoplasm</keyword>
<keyword id="KW-0460">Magnesium</keyword>
<keyword id="KW-0479">Metal-binding</keyword>
<keyword id="KW-0566">Pantothenate biosynthesis</keyword>
<keyword id="KW-0808">Transferase</keyword>
<proteinExistence type="inferred from homology"/>
<gene>
    <name evidence="1" type="primary">panB</name>
    <name type="ordered locus">BARBAKC583_0477</name>
</gene>
<name>PANB_BARBK</name>
<accession>A1US40</accession>
<sequence length="271" mass="29423">MSVHKSIKRITASEIQAKKKQEPIVSLTAYQAYSARIADPHCDFLLVGDSVGMIVHGFDTTLPVDVDMMILHGKAVMRGSQRALVVVDMPFGSYEKSPEQAFSNASRILADTGCGAVKLEGGIHMAKTIDFLCKRGIPVMSHIGLTPQAVNHFGGFKTQGRDKSDWEKIEADAAAIEDAGAFAVVVEAVVEPLAVKLTEKLSIPTIGIGASNQCDGQILVMEDMLGYGAWAPKFVRRYGTLEQAMDTAIRNYAEDVKSRAFPSDSEIYKLK</sequence>
<organism>
    <name type="scientific">Bartonella bacilliformis (strain ATCC 35685 / KC583 / Herrer 020/F12,63)</name>
    <dbReference type="NCBI Taxonomy" id="360095"/>
    <lineage>
        <taxon>Bacteria</taxon>
        <taxon>Pseudomonadati</taxon>
        <taxon>Pseudomonadota</taxon>
        <taxon>Alphaproteobacteria</taxon>
        <taxon>Hyphomicrobiales</taxon>
        <taxon>Bartonellaceae</taxon>
        <taxon>Bartonella</taxon>
    </lineage>
</organism>
<evidence type="ECO:0000255" key="1">
    <source>
        <dbReference type="HAMAP-Rule" id="MF_00156"/>
    </source>
</evidence>
<dbReference type="EC" id="2.1.2.11" evidence="1"/>
<dbReference type="EMBL" id="CP000524">
    <property type="protein sequence ID" value="ABM44890.1"/>
    <property type="molecule type" value="Genomic_DNA"/>
</dbReference>
<dbReference type="RefSeq" id="WP_005766554.1">
    <property type="nucleotide sequence ID" value="NC_008783.1"/>
</dbReference>
<dbReference type="SMR" id="A1US40"/>
<dbReference type="STRING" id="360095.BARBAKC583_0477"/>
<dbReference type="GeneID" id="4684397"/>
<dbReference type="KEGG" id="bbk:BARBAKC583_0477"/>
<dbReference type="PATRIC" id="fig|360095.6.peg.459"/>
<dbReference type="eggNOG" id="COG0413">
    <property type="taxonomic scope" value="Bacteria"/>
</dbReference>
<dbReference type="HOGENOM" id="CLU_036645_1_0_5"/>
<dbReference type="OrthoDB" id="9781789at2"/>
<dbReference type="UniPathway" id="UPA00028">
    <property type="reaction ID" value="UER00003"/>
</dbReference>
<dbReference type="Proteomes" id="UP000000643">
    <property type="component" value="Chromosome"/>
</dbReference>
<dbReference type="GO" id="GO:0005737">
    <property type="term" value="C:cytoplasm"/>
    <property type="evidence" value="ECO:0007669"/>
    <property type="project" value="UniProtKB-SubCell"/>
</dbReference>
<dbReference type="GO" id="GO:0003864">
    <property type="term" value="F:3-methyl-2-oxobutanoate hydroxymethyltransferase activity"/>
    <property type="evidence" value="ECO:0007669"/>
    <property type="project" value="UniProtKB-UniRule"/>
</dbReference>
<dbReference type="GO" id="GO:0000287">
    <property type="term" value="F:magnesium ion binding"/>
    <property type="evidence" value="ECO:0007669"/>
    <property type="project" value="TreeGrafter"/>
</dbReference>
<dbReference type="GO" id="GO:0015940">
    <property type="term" value="P:pantothenate biosynthetic process"/>
    <property type="evidence" value="ECO:0007669"/>
    <property type="project" value="UniProtKB-UniRule"/>
</dbReference>
<dbReference type="CDD" id="cd06557">
    <property type="entry name" value="KPHMT-like"/>
    <property type="match status" value="1"/>
</dbReference>
<dbReference type="FunFam" id="3.20.20.60:FF:000003">
    <property type="entry name" value="3-methyl-2-oxobutanoate hydroxymethyltransferase"/>
    <property type="match status" value="1"/>
</dbReference>
<dbReference type="Gene3D" id="3.20.20.60">
    <property type="entry name" value="Phosphoenolpyruvate-binding domains"/>
    <property type="match status" value="1"/>
</dbReference>
<dbReference type="HAMAP" id="MF_00156">
    <property type="entry name" value="PanB"/>
    <property type="match status" value="1"/>
</dbReference>
<dbReference type="InterPro" id="IPR003700">
    <property type="entry name" value="Pantoate_hydroxy_MeTrfase"/>
</dbReference>
<dbReference type="InterPro" id="IPR015813">
    <property type="entry name" value="Pyrv/PenolPyrv_kinase-like_dom"/>
</dbReference>
<dbReference type="InterPro" id="IPR040442">
    <property type="entry name" value="Pyrv_kinase-like_dom_sf"/>
</dbReference>
<dbReference type="NCBIfam" id="TIGR00222">
    <property type="entry name" value="panB"/>
    <property type="match status" value="1"/>
</dbReference>
<dbReference type="NCBIfam" id="NF001452">
    <property type="entry name" value="PRK00311.1"/>
    <property type="match status" value="1"/>
</dbReference>
<dbReference type="PANTHER" id="PTHR20881">
    <property type="entry name" value="3-METHYL-2-OXOBUTANOATE HYDROXYMETHYLTRANSFERASE"/>
    <property type="match status" value="1"/>
</dbReference>
<dbReference type="PANTHER" id="PTHR20881:SF0">
    <property type="entry name" value="3-METHYL-2-OXOBUTANOATE HYDROXYMETHYLTRANSFERASE"/>
    <property type="match status" value="1"/>
</dbReference>
<dbReference type="Pfam" id="PF02548">
    <property type="entry name" value="Pantoate_transf"/>
    <property type="match status" value="1"/>
</dbReference>
<dbReference type="PIRSF" id="PIRSF000388">
    <property type="entry name" value="Pantoate_hydroxy_MeTrfase"/>
    <property type="match status" value="1"/>
</dbReference>
<dbReference type="SUPFAM" id="SSF51621">
    <property type="entry name" value="Phosphoenolpyruvate/pyruvate domain"/>
    <property type="match status" value="1"/>
</dbReference>